<reference key="1">
    <citation type="journal article" date="2004" name="Nat. Genet.">
        <title>Complete sequencing and characterization of 21,243 full-length human cDNAs.</title>
        <authorList>
            <person name="Ota T."/>
            <person name="Suzuki Y."/>
            <person name="Nishikawa T."/>
            <person name="Otsuki T."/>
            <person name="Sugiyama T."/>
            <person name="Irie R."/>
            <person name="Wakamatsu A."/>
            <person name="Hayashi K."/>
            <person name="Sato H."/>
            <person name="Nagai K."/>
            <person name="Kimura K."/>
            <person name="Makita H."/>
            <person name="Sekine M."/>
            <person name="Obayashi M."/>
            <person name="Nishi T."/>
            <person name="Shibahara T."/>
            <person name="Tanaka T."/>
            <person name="Ishii S."/>
            <person name="Yamamoto J."/>
            <person name="Saito K."/>
            <person name="Kawai Y."/>
            <person name="Isono Y."/>
            <person name="Nakamura Y."/>
            <person name="Nagahari K."/>
            <person name="Murakami K."/>
            <person name="Yasuda T."/>
            <person name="Iwayanagi T."/>
            <person name="Wagatsuma M."/>
            <person name="Shiratori A."/>
            <person name="Sudo H."/>
            <person name="Hosoiri T."/>
            <person name="Kaku Y."/>
            <person name="Kodaira H."/>
            <person name="Kondo H."/>
            <person name="Sugawara M."/>
            <person name="Takahashi M."/>
            <person name="Kanda K."/>
            <person name="Yokoi T."/>
            <person name="Furuya T."/>
            <person name="Kikkawa E."/>
            <person name="Omura Y."/>
            <person name="Abe K."/>
            <person name="Kamihara K."/>
            <person name="Katsuta N."/>
            <person name="Sato K."/>
            <person name="Tanikawa M."/>
            <person name="Yamazaki M."/>
            <person name="Ninomiya K."/>
            <person name="Ishibashi T."/>
            <person name="Yamashita H."/>
            <person name="Murakawa K."/>
            <person name="Fujimori K."/>
            <person name="Tanai H."/>
            <person name="Kimata M."/>
            <person name="Watanabe M."/>
            <person name="Hiraoka S."/>
            <person name="Chiba Y."/>
            <person name="Ishida S."/>
            <person name="Ono Y."/>
            <person name="Takiguchi S."/>
            <person name="Watanabe S."/>
            <person name="Yosida M."/>
            <person name="Hotuta T."/>
            <person name="Kusano J."/>
            <person name="Kanehori K."/>
            <person name="Takahashi-Fujii A."/>
            <person name="Hara H."/>
            <person name="Tanase T.-O."/>
            <person name="Nomura Y."/>
            <person name="Togiya S."/>
            <person name="Komai F."/>
            <person name="Hara R."/>
            <person name="Takeuchi K."/>
            <person name="Arita M."/>
            <person name="Imose N."/>
            <person name="Musashino K."/>
            <person name="Yuuki H."/>
            <person name="Oshima A."/>
            <person name="Sasaki N."/>
            <person name="Aotsuka S."/>
            <person name="Yoshikawa Y."/>
            <person name="Matsunawa H."/>
            <person name="Ichihara T."/>
            <person name="Shiohata N."/>
            <person name="Sano S."/>
            <person name="Moriya S."/>
            <person name="Momiyama H."/>
            <person name="Satoh N."/>
            <person name="Takami S."/>
            <person name="Terashima Y."/>
            <person name="Suzuki O."/>
            <person name="Nakagawa S."/>
            <person name="Senoh A."/>
            <person name="Mizoguchi H."/>
            <person name="Goto Y."/>
            <person name="Shimizu F."/>
            <person name="Wakebe H."/>
            <person name="Hishigaki H."/>
            <person name="Watanabe T."/>
            <person name="Sugiyama A."/>
            <person name="Takemoto M."/>
            <person name="Kawakami B."/>
            <person name="Yamazaki M."/>
            <person name="Watanabe K."/>
            <person name="Kumagai A."/>
            <person name="Itakura S."/>
            <person name="Fukuzumi Y."/>
            <person name="Fujimori Y."/>
            <person name="Komiyama M."/>
            <person name="Tashiro H."/>
            <person name="Tanigami A."/>
            <person name="Fujiwara T."/>
            <person name="Ono T."/>
            <person name="Yamada K."/>
            <person name="Fujii Y."/>
            <person name="Ozaki K."/>
            <person name="Hirao M."/>
            <person name="Ohmori Y."/>
            <person name="Kawabata A."/>
            <person name="Hikiji T."/>
            <person name="Kobatake N."/>
            <person name="Inagaki H."/>
            <person name="Ikema Y."/>
            <person name="Okamoto S."/>
            <person name="Okitani R."/>
            <person name="Kawakami T."/>
            <person name="Noguchi S."/>
            <person name="Itoh T."/>
            <person name="Shigeta K."/>
            <person name="Senba T."/>
            <person name="Matsumura K."/>
            <person name="Nakajima Y."/>
            <person name="Mizuno T."/>
            <person name="Morinaga M."/>
            <person name="Sasaki M."/>
            <person name="Togashi T."/>
            <person name="Oyama M."/>
            <person name="Hata H."/>
            <person name="Watanabe M."/>
            <person name="Komatsu T."/>
            <person name="Mizushima-Sugano J."/>
            <person name="Satoh T."/>
            <person name="Shirai Y."/>
            <person name="Takahashi Y."/>
            <person name="Nakagawa K."/>
            <person name="Okumura K."/>
            <person name="Nagase T."/>
            <person name="Nomura N."/>
            <person name="Kikuchi H."/>
            <person name="Masuho Y."/>
            <person name="Yamashita R."/>
            <person name="Nakai K."/>
            <person name="Yada T."/>
            <person name="Nakamura Y."/>
            <person name="Ohara O."/>
            <person name="Isogai T."/>
            <person name="Sugano S."/>
        </authorList>
    </citation>
    <scope>NUCLEOTIDE SEQUENCE [LARGE SCALE MRNA] (ISOFORM 3)</scope>
    <source>
        <tissue>Corpus callosum</tissue>
    </source>
</reference>
<reference key="2">
    <citation type="journal article" date="2003" name="Nature">
        <title>The DNA sequence and analysis of human chromosome 6.</title>
        <authorList>
            <person name="Mungall A.J."/>
            <person name="Palmer S.A."/>
            <person name="Sims S.K."/>
            <person name="Edwards C.A."/>
            <person name="Ashurst J.L."/>
            <person name="Wilming L."/>
            <person name="Jones M.C."/>
            <person name="Horton R."/>
            <person name="Hunt S.E."/>
            <person name="Scott C.E."/>
            <person name="Gilbert J.G.R."/>
            <person name="Clamp M.E."/>
            <person name="Bethel G."/>
            <person name="Milne S."/>
            <person name="Ainscough R."/>
            <person name="Almeida J.P."/>
            <person name="Ambrose K.D."/>
            <person name="Andrews T.D."/>
            <person name="Ashwell R.I.S."/>
            <person name="Babbage A.K."/>
            <person name="Bagguley C.L."/>
            <person name="Bailey J."/>
            <person name="Banerjee R."/>
            <person name="Barker D.J."/>
            <person name="Barlow K.F."/>
            <person name="Bates K."/>
            <person name="Beare D.M."/>
            <person name="Beasley H."/>
            <person name="Beasley O."/>
            <person name="Bird C.P."/>
            <person name="Blakey S.E."/>
            <person name="Bray-Allen S."/>
            <person name="Brook J."/>
            <person name="Brown A.J."/>
            <person name="Brown J.Y."/>
            <person name="Burford D.C."/>
            <person name="Burrill W."/>
            <person name="Burton J."/>
            <person name="Carder C."/>
            <person name="Carter N.P."/>
            <person name="Chapman J.C."/>
            <person name="Clark S.Y."/>
            <person name="Clark G."/>
            <person name="Clee C.M."/>
            <person name="Clegg S."/>
            <person name="Cobley V."/>
            <person name="Collier R.E."/>
            <person name="Collins J.E."/>
            <person name="Colman L.K."/>
            <person name="Corby N.R."/>
            <person name="Coville G.J."/>
            <person name="Culley K.M."/>
            <person name="Dhami P."/>
            <person name="Davies J."/>
            <person name="Dunn M."/>
            <person name="Earthrowl M.E."/>
            <person name="Ellington A.E."/>
            <person name="Evans K.A."/>
            <person name="Faulkner L."/>
            <person name="Francis M.D."/>
            <person name="Frankish A."/>
            <person name="Frankland J."/>
            <person name="French L."/>
            <person name="Garner P."/>
            <person name="Garnett J."/>
            <person name="Ghori M.J."/>
            <person name="Gilby L.M."/>
            <person name="Gillson C.J."/>
            <person name="Glithero R.J."/>
            <person name="Grafham D.V."/>
            <person name="Grant M."/>
            <person name="Gribble S."/>
            <person name="Griffiths C."/>
            <person name="Griffiths M.N.D."/>
            <person name="Hall R."/>
            <person name="Halls K.S."/>
            <person name="Hammond S."/>
            <person name="Harley J.L."/>
            <person name="Hart E.A."/>
            <person name="Heath P.D."/>
            <person name="Heathcott R."/>
            <person name="Holmes S.J."/>
            <person name="Howden P.J."/>
            <person name="Howe K.L."/>
            <person name="Howell G.R."/>
            <person name="Huckle E."/>
            <person name="Humphray S.J."/>
            <person name="Humphries M.D."/>
            <person name="Hunt A.R."/>
            <person name="Johnson C.M."/>
            <person name="Joy A.A."/>
            <person name="Kay M."/>
            <person name="Keenan S.J."/>
            <person name="Kimberley A.M."/>
            <person name="King A."/>
            <person name="Laird G.K."/>
            <person name="Langford C."/>
            <person name="Lawlor S."/>
            <person name="Leongamornlert D.A."/>
            <person name="Leversha M."/>
            <person name="Lloyd C.R."/>
            <person name="Lloyd D.M."/>
            <person name="Loveland J.E."/>
            <person name="Lovell J."/>
            <person name="Martin S."/>
            <person name="Mashreghi-Mohammadi M."/>
            <person name="Maslen G.L."/>
            <person name="Matthews L."/>
            <person name="McCann O.T."/>
            <person name="McLaren S.J."/>
            <person name="McLay K."/>
            <person name="McMurray A."/>
            <person name="Moore M.J.F."/>
            <person name="Mullikin J.C."/>
            <person name="Niblett D."/>
            <person name="Nickerson T."/>
            <person name="Novik K.L."/>
            <person name="Oliver K."/>
            <person name="Overton-Larty E.K."/>
            <person name="Parker A."/>
            <person name="Patel R."/>
            <person name="Pearce A.V."/>
            <person name="Peck A.I."/>
            <person name="Phillimore B.J.C.T."/>
            <person name="Phillips S."/>
            <person name="Plumb R.W."/>
            <person name="Porter K.M."/>
            <person name="Ramsey Y."/>
            <person name="Ranby S.A."/>
            <person name="Rice C.M."/>
            <person name="Ross M.T."/>
            <person name="Searle S.M."/>
            <person name="Sehra H.K."/>
            <person name="Sheridan E."/>
            <person name="Skuce C.D."/>
            <person name="Smith S."/>
            <person name="Smith M."/>
            <person name="Spraggon L."/>
            <person name="Squares S.L."/>
            <person name="Steward C.A."/>
            <person name="Sycamore N."/>
            <person name="Tamlyn-Hall G."/>
            <person name="Tester J."/>
            <person name="Theaker A.J."/>
            <person name="Thomas D.W."/>
            <person name="Thorpe A."/>
            <person name="Tracey A."/>
            <person name="Tromans A."/>
            <person name="Tubby B."/>
            <person name="Wall M."/>
            <person name="Wallis J.M."/>
            <person name="West A.P."/>
            <person name="White S.S."/>
            <person name="Whitehead S.L."/>
            <person name="Whittaker H."/>
            <person name="Wild A."/>
            <person name="Willey D.J."/>
            <person name="Wilmer T.E."/>
            <person name="Wood J.M."/>
            <person name="Wray P.W."/>
            <person name="Wyatt J.C."/>
            <person name="Young L."/>
            <person name="Younger R.M."/>
            <person name="Bentley D.R."/>
            <person name="Coulson A."/>
            <person name="Durbin R.M."/>
            <person name="Hubbard T."/>
            <person name="Sulston J.E."/>
            <person name="Dunham I."/>
            <person name="Rogers J."/>
            <person name="Beck S."/>
        </authorList>
    </citation>
    <scope>NUCLEOTIDE SEQUENCE [LARGE SCALE GENOMIC DNA]</scope>
</reference>
<reference key="3">
    <citation type="submission" date="2005-09" db="EMBL/GenBank/DDBJ databases">
        <authorList>
            <person name="Mural R.J."/>
            <person name="Istrail S."/>
            <person name="Sutton G.G."/>
            <person name="Florea L."/>
            <person name="Halpern A.L."/>
            <person name="Mobarry C.M."/>
            <person name="Lippert R."/>
            <person name="Walenz B."/>
            <person name="Shatkay H."/>
            <person name="Dew I."/>
            <person name="Miller J.R."/>
            <person name="Flanigan M.J."/>
            <person name="Edwards N.J."/>
            <person name="Bolanos R."/>
            <person name="Fasulo D."/>
            <person name="Halldorsson B.V."/>
            <person name="Hannenhalli S."/>
            <person name="Turner R."/>
            <person name="Yooseph S."/>
            <person name="Lu F."/>
            <person name="Nusskern D.R."/>
            <person name="Shue B.C."/>
            <person name="Zheng X.H."/>
            <person name="Zhong F."/>
            <person name="Delcher A.L."/>
            <person name="Huson D.H."/>
            <person name="Kravitz S.A."/>
            <person name="Mouchard L."/>
            <person name="Reinert K."/>
            <person name="Remington K.A."/>
            <person name="Clark A.G."/>
            <person name="Waterman M.S."/>
            <person name="Eichler E.E."/>
            <person name="Adams M.D."/>
            <person name="Hunkapiller M.W."/>
            <person name="Myers E.W."/>
            <person name="Venter J.C."/>
        </authorList>
    </citation>
    <scope>NUCLEOTIDE SEQUENCE [LARGE SCALE GENOMIC DNA]</scope>
</reference>
<reference key="4">
    <citation type="journal article" date="2004" name="Genome Res.">
        <title>The status, quality, and expansion of the NIH full-length cDNA project: the Mammalian Gene Collection (MGC).</title>
        <authorList>
            <consortium name="The MGC Project Team"/>
        </authorList>
    </citation>
    <scope>NUCLEOTIDE SEQUENCE [LARGE SCALE MRNA] (ISOFORMS 1 AND 2)</scope>
    <scope>NUCLEOTIDE SEQUENCE [LARGE SCALE MRNA] OF 37-946 (ISOFORM 4)</scope>
    <source>
        <tissue>Placenta</tissue>
        <tissue>Testis</tissue>
    </source>
</reference>
<reference key="5">
    <citation type="submission" date="2001-07" db="EMBL/GenBank/DDBJ databases">
        <title>The complete coding region of SNX14.</title>
        <authorList>
            <person name="Hong W."/>
        </authorList>
    </citation>
    <scope>NUCLEOTIDE SEQUENCE [MRNA] OF 8-946 (ISOFORM 2)</scope>
</reference>
<reference key="6">
    <citation type="journal article" date="2001" name="Biochem. J.">
        <title>A large family of endosome-localized proteins related to sorting nexin 1.</title>
        <authorList>
            <person name="Teasdale R.D."/>
            <person name="Loci D."/>
            <person name="Houghton F."/>
            <person name="Karlsson L."/>
            <person name="Gleeson P.A."/>
        </authorList>
    </citation>
    <scope>NUCLEOTIDE SEQUENCE [MRNA] OF 573-946</scope>
</reference>
<reference key="7">
    <citation type="journal article" date="2014" name="Am. J. Hum. Genet.">
        <title>Mutations in SNX14 cause a distinctive autosomal-recessive cerebellar ataxia and intellectual disability syndrome.</title>
        <authorList>
            <person name="Thomas A.C."/>
            <person name="Williams H."/>
            <person name="Seto-Salvia N."/>
            <person name="Bacchelli C."/>
            <person name="Jenkins D."/>
            <person name="O'Sullivan M."/>
            <person name="Mengrelis K."/>
            <person name="Ishida M."/>
            <person name="Ocaka L."/>
            <person name="Chanudet E."/>
            <person name="James C."/>
            <person name="Lescai F."/>
            <person name="Anderson G."/>
            <person name="Morrogh D."/>
            <person name="Ryten M."/>
            <person name="Duncan A.J."/>
            <person name="Pai Y.J."/>
            <person name="Saraiva J.M."/>
            <person name="Ramos F."/>
            <person name="Farren B."/>
            <person name="Saunders D."/>
            <person name="Vernay B."/>
            <person name="Gissen P."/>
            <person name="Straatmaan-Iwanowska A."/>
            <person name="Baas F."/>
            <person name="Wood N.W."/>
            <person name="Hersheson J."/>
            <person name="Houlden H."/>
            <person name="Hurst J."/>
            <person name="Scott R."/>
            <person name="Bitner-Glindzicz M."/>
            <person name="Moore G.E."/>
            <person name="Sousa S.B."/>
            <person name="Stanier P."/>
        </authorList>
    </citation>
    <scope>INVOLVEMENT IN SCAR20</scope>
</reference>
<reference key="8">
    <citation type="journal article" date="2014" name="J. Proteomics">
        <title>An enzyme assisted RP-RPLC approach for in-depth analysis of human liver phosphoproteome.</title>
        <authorList>
            <person name="Bian Y."/>
            <person name="Song C."/>
            <person name="Cheng K."/>
            <person name="Dong M."/>
            <person name="Wang F."/>
            <person name="Huang J."/>
            <person name="Sun D."/>
            <person name="Wang L."/>
            <person name="Ye M."/>
            <person name="Zou H."/>
        </authorList>
    </citation>
    <scope>PHOSPHORYLATION [LARGE SCALE ANALYSIS] AT SER-548</scope>
    <scope>IDENTIFICATION BY MASS SPECTROMETRY [LARGE SCALE ANALYSIS]</scope>
    <source>
        <tissue>Liver</tissue>
    </source>
</reference>
<reference key="9">
    <citation type="journal article" date="2015" name="Nat. Genet.">
        <title>Biallelic mutations in SNX14 cause a syndromic form of cerebellar atrophy and lysosome-autophagosome dysfunction.</title>
        <authorList>
            <person name="Akizu N."/>
            <person name="Cantagrel V."/>
            <person name="Zaki M.S."/>
            <person name="Al-Gazali L."/>
            <person name="Wang X."/>
            <person name="Rosti R.O."/>
            <person name="Dikoglu E."/>
            <person name="Gelot A.B."/>
            <person name="Rosti B."/>
            <person name="Vaux K.K."/>
            <person name="Scott E.M."/>
            <person name="Silhavy J.L."/>
            <person name="Schroth J."/>
            <person name="Copeland B."/>
            <person name="Schaffer A.E."/>
            <person name="Gordts P.L."/>
            <person name="Esko J.D."/>
            <person name="Buschman M.D."/>
            <person name="Field S.J."/>
            <person name="Napolitano G."/>
            <person name="Abdel-Salam G.M."/>
            <person name="Ozgul R.K."/>
            <person name="Sagiroglu M.S."/>
            <person name="Azam M."/>
            <person name="Ismail S."/>
            <person name="Aglan M."/>
            <person name="Selim L."/>
            <person name="Mahmoud I.G."/>
            <person name="Abdel-Hadi S."/>
            <person name="Badawy A.E."/>
            <person name="Sadek A.A."/>
            <person name="Mojahedi F."/>
            <person name="Kayserili H."/>
            <person name="Masri A."/>
            <person name="Bastaki L."/>
            <person name="Temtamy S."/>
            <person name="Mueller U."/>
            <person name="Desguerre I."/>
            <person name="Casanova J.L."/>
            <person name="Dursun A."/>
            <person name="Gunel M."/>
            <person name="Gabriel S.B."/>
            <person name="de Lonlay P."/>
            <person name="Gleeson J.G."/>
        </authorList>
    </citation>
    <scope>FUNCTION</scope>
    <scope>SUBCELLULAR LOCATION</scope>
    <scope>PHOSPHOINOSITIDE-BINDING</scope>
    <scope>TISSUE SPECIFICITY</scope>
    <scope>INVOLVEMENT IN SCAR20</scope>
</reference>
<reference key="10">
    <citation type="submission" date="2013-03" db="PDB data bank">
        <title>Crystal structure of the phox-homology domain of human sorting nexin 14.</title>
        <authorList>
            <person name="Vollmar M."/>
            <person name="Kiyani W."/>
            <person name="Shrestha L."/>
            <person name="Goubin S."/>
            <person name="Krojer T."/>
            <person name="Pike A.C.W."/>
            <person name="Carpenter E."/>
            <person name="Quigley A."/>
            <person name="Mckenzie A."/>
            <person name="Burgess-Brown N."/>
            <person name="Von Delft F."/>
            <person name="Arrowsmith C.H."/>
            <person name="Bountra C."/>
            <person name="Edwards A."/>
            <person name="Yue W.W."/>
        </authorList>
    </citation>
    <scope>X-RAY CRYSTALLOGRAPHY (2.55 ANGSTROMS) OF 558-702</scope>
</reference>
<reference key="11">
    <citation type="journal article" date="2014" name="J. Biol. Chem.">
        <title>Structural basis for different phosphoinositide specificities of the PX domains of sorting nexins regulating G-protein signaling.</title>
        <authorList>
            <person name="Mas C."/>
            <person name="Norwood S.J."/>
            <person name="Bugarcic A."/>
            <person name="Kinna G."/>
            <person name="Leneva N."/>
            <person name="Kovtun O."/>
            <person name="Ghai R."/>
            <person name="Ona Yanez L.E."/>
            <person name="Davis J.L."/>
            <person name="Teasdale R.D."/>
            <person name="Collins B.M."/>
        </authorList>
    </citation>
    <scope>X-RAY CRYSTALLOGRAPHY (2.55 ANGSTROMS) OF 561-686</scope>
</reference>
<reference key="12">
    <citation type="journal article" date="2015" name="Arch. Iran. Med.">
        <title>Exome Sequencing and Linkage Analysis Identified Novel Candidate Genes in Recessive Intellectual Disability Associated with Ataxia.</title>
        <authorList>
            <person name="Jazayeri R."/>
            <person name="Hu H."/>
            <person name="Fattahi Z."/>
            <person name="Musante L."/>
            <person name="Abedini S.S."/>
            <person name="Hosseini M."/>
            <person name="Wienker T.F."/>
            <person name="Ropers H.H."/>
            <person name="Najmabadi H."/>
            <person name="Kahrizi K."/>
        </authorList>
    </citation>
    <scope>VARIANT SCAR20 153-TYR--MET-946 DEL</scope>
</reference>
<proteinExistence type="evidence at protein level"/>
<accession>Q9Y5W7</accession>
<accession>B4DI55</accession>
<accession>Q4VBR3</accession>
<accession>Q5TCF9</accession>
<accession>Q5TCG0</accession>
<accession>Q6NUI7</accession>
<accession>Q6PI37</accession>
<accession>Q9BSD1</accession>
<organism>
    <name type="scientific">Homo sapiens</name>
    <name type="common">Human</name>
    <dbReference type="NCBI Taxonomy" id="9606"/>
    <lineage>
        <taxon>Eukaryota</taxon>
        <taxon>Metazoa</taxon>
        <taxon>Chordata</taxon>
        <taxon>Craniata</taxon>
        <taxon>Vertebrata</taxon>
        <taxon>Euteleostomi</taxon>
        <taxon>Mammalia</taxon>
        <taxon>Eutheria</taxon>
        <taxon>Euarchontoglires</taxon>
        <taxon>Primates</taxon>
        <taxon>Haplorrhini</taxon>
        <taxon>Catarrhini</taxon>
        <taxon>Hominidae</taxon>
        <taxon>Homo</taxon>
    </lineage>
</organism>
<comment type="function">
    <text evidence="1 6 8 14">Plays a role in maintaining normal neuronal excitability and synaptic transmission. May be involved in several stages of intracellular trafficking (By similarity). Required for autophagosome clearance, possibly by mediating the fusion of lysosomes with autophagosomes (Probable). Binds phosphatidylinositol 3,5-bisphosphate (PtdIns(3,5)P2), a key component of late endosomes/lysosomes (PubMed:25848753). Does not bind phosphatidylinositol 3-phosphate (PtdIns(3P)) (PubMed:25148684, PubMed:25848753).</text>
</comment>
<comment type="subcellular location">
    <subcellularLocation>
        <location evidence="8">Lysosome membrane</location>
        <topology evidence="13">Multi-pass membrane protein</topology>
    </subcellularLocation>
    <subcellularLocation>
        <location evidence="8">Late endosome membrane</location>
        <topology evidence="13">Multi-pass membrane protein</topology>
    </subcellularLocation>
    <subcellularLocation>
        <location evidence="1">Cell projection</location>
        <location evidence="1">Dendrite</location>
    </subcellularLocation>
</comment>
<comment type="alternative products">
    <event type="alternative splicing"/>
    <isoform>
        <id>Q9Y5W7-1</id>
        <name>1</name>
        <sequence type="displayed"/>
    </isoform>
    <isoform>
        <id>Q9Y5W7-2</id>
        <name>2</name>
        <sequence type="described" ref="VSP_037776 VSP_037777"/>
    </isoform>
    <isoform>
        <id>Q9Y5W7-3</id>
        <name>3</name>
        <sequence type="described" ref="VSP_037775"/>
    </isoform>
    <isoform>
        <id>Q9Y5W7-4</id>
        <name>4</name>
        <sequence type="described" ref="VSP_037777"/>
    </isoform>
</comment>
<comment type="tissue specificity">
    <text evidence="8">Widely expressed both in fetal and adult tissues.</text>
</comment>
<comment type="disease" evidence="7 8 9">
    <disease id="DI-04379">
        <name>Spinocerebellar ataxia, autosomal recessive, 20</name>
        <acronym>SCAR20</acronym>
        <description>A form of spinocerebellar ataxia, a clinically and genetically heterogeneous group of cerebellar disorders due to degeneration of the cerebellum with variable involvement of the brainstem and spinal cord. SCAR20 is characterized by cerebellar atrophy, ataxia, coarsened facial features, severely delayed psychomotor development with poor or absent speech, and intellectual disability.</description>
        <dbReference type="MIM" id="616354"/>
    </disease>
    <text>The disease is caused by variants affecting the gene represented in this entry.</text>
</comment>
<comment type="similarity">
    <text evidence="13">Belongs to the sorting nexin family.</text>
</comment>
<feature type="chain" id="PRO_0000213861" description="Sorting nexin-14">
    <location>
        <begin position="1"/>
        <end position="946"/>
    </location>
</feature>
<feature type="transmembrane region" description="Helical" evidence="2">
    <location>
        <begin position="24"/>
        <end position="44"/>
    </location>
</feature>
<feature type="transmembrane region" description="Helical" evidence="2">
    <location>
        <begin position="49"/>
        <end position="69"/>
    </location>
</feature>
<feature type="domain" description="PXA" evidence="3 5">
    <location>
        <begin position="130"/>
        <end position="304"/>
    </location>
</feature>
<feature type="domain" description="RGS" evidence="4">
    <location>
        <begin position="336"/>
        <end position="468"/>
    </location>
</feature>
<feature type="domain" description="PX" evidence="3">
    <location>
        <begin position="570"/>
        <end position="690"/>
    </location>
</feature>
<feature type="modified residue" description="Phosphoserine" evidence="15">
    <location>
        <position position="548"/>
    </location>
</feature>
<feature type="splice variant" id="VSP_037775" description="In isoform 3." evidence="10">
    <location>
        <begin position="1"/>
        <end position="52"/>
    </location>
</feature>
<feature type="splice variant" id="VSP_037776" description="In isoform 2." evidence="11 12">
    <location>
        <begin position="140"/>
        <end position="183"/>
    </location>
</feature>
<feature type="splice variant" id="VSP_037777" description="In isoform 2 and isoform 4." evidence="11 12">
    <location>
        <begin position="483"/>
        <end position="491"/>
    </location>
</feature>
<feature type="sequence variant" id="VAR_083399" description="In SCAR20." evidence="9">
    <location>
        <begin position="153"/>
        <end position="946"/>
    </location>
</feature>
<feature type="sequence conflict" description="In Ref. 4; AAH68589." evidence="13" ref="4">
    <original>A</original>
    <variation>V</variation>
    <location>
        <position position="60"/>
    </location>
</feature>
<feature type="sequence conflict" description="In Ref. 4; AAH68589." evidence="13" ref="4">
    <original>P</original>
    <variation>R</variation>
    <location>
        <position position="317"/>
    </location>
</feature>
<feature type="sequence conflict" description="In Ref. 4; AAH46520." evidence="13" ref="4">
    <original>F</original>
    <variation>I</variation>
    <location>
        <position position="322"/>
    </location>
</feature>
<feature type="sequence conflict" description="In Ref. 4; AAH46520." evidence="13" ref="4">
    <original>L</original>
    <variation>P</variation>
    <location>
        <position position="346"/>
    </location>
</feature>
<feature type="sequence conflict" description="In Ref. 4; AAH95419." evidence="13" ref="4">
    <original>I</original>
    <variation>L</variation>
    <location>
        <position position="696"/>
    </location>
</feature>
<feature type="sequence conflict" description="In Ref. 4; AAH46520." evidence="13" ref="4">
    <original>Y</original>
    <variation>C</variation>
    <location>
        <position position="882"/>
    </location>
</feature>
<feature type="helix" evidence="16">
    <location>
        <begin position="562"/>
        <end position="564"/>
    </location>
</feature>
<feature type="strand" evidence="16">
    <location>
        <begin position="565"/>
        <end position="575"/>
    </location>
</feature>
<feature type="strand" evidence="16">
    <location>
        <begin position="589"/>
        <end position="598"/>
    </location>
</feature>
<feature type="strand" evidence="16">
    <location>
        <begin position="609"/>
        <end position="615"/>
    </location>
</feature>
<feature type="helix" evidence="16">
    <location>
        <begin position="617"/>
        <end position="631"/>
    </location>
</feature>
<feature type="strand" evidence="17">
    <location>
        <begin position="635"/>
        <end position="637"/>
    </location>
</feature>
<feature type="helix" evidence="16">
    <location>
        <begin position="650"/>
        <end position="668"/>
    </location>
</feature>
<feature type="helix" evidence="16">
    <location>
        <begin position="671"/>
        <end position="673"/>
    </location>
</feature>
<feature type="helix" evidence="16">
    <location>
        <begin position="677"/>
        <end position="682"/>
    </location>
</feature>
<evidence type="ECO:0000250" key="1">
    <source>
        <dbReference type="UniProtKB" id="Q8BHY8"/>
    </source>
</evidence>
<evidence type="ECO:0000255" key="2"/>
<evidence type="ECO:0000255" key="3">
    <source>
        <dbReference type="PROSITE-ProRule" id="PRU00147"/>
    </source>
</evidence>
<evidence type="ECO:0000255" key="4">
    <source>
        <dbReference type="PROSITE-ProRule" id="PRU00171"/>
    </source>
</evidence>
<evidence type="ECO:0000255" key="5">
    <source>
        <dbReference type="PROSITE-ProRule" id="PRU00553"/>
    </source>
</evidence>
<evidence type="ECO:0000269" key="6">
    <source>
    </source>
</evidence>
<evidence type="ECO:0000269" key="7">
    <source>
    </source>
</evidence>
<evidence type="ECO:0000269" key="8">
    <source>
    </source>
</evidence>
<evidence type="ECO:0000269" key="9">
    <source>
    </source>
</evidence>
<evidence type="ECO:0000303" key="10">
    <source>
    </source>
</evidence>
<evidence type="ECO:0000303" key="11">
    <source>
    </source>
</evidence>
<evidence type="ECO:0000303" key="12">
    <source ref="5"/>
</evidence>
<evidence type="ECO:0000305" key="13"/>
<evidence type="ECO:0000305" key="14">
    <source>
    </source>
</evidence>
<evidence type="ECO:0007744" key="15">
    <source>
    </source>
</evidence>
<evidence type="ECO:0007829" key="16">
    <source>
        <dbReference type="PDB" id="4BGJ"/>
    </source>
</evidence>
<evidence type="ECO:0007829" key="17">
    <source>
        <dbReference type="PDB" id="4PQP"/>
    </source>
</evidence>
<protein>
    <recommendedName>
        <fullName>Sorting nexin-14</fullName>
    </recommendedName>
</protein>
<gene>
    <name type="primary">SNX14</name>
</gene>
<name>SNX14_HUMAN</name>
<dbReference type="EMBL" id="AK295417">
    <property type="protein sequence ID" value="BAG58367.1"/>
    <property type="molecule type" value="mRNA"/>
</dbReference>
<dbReference type="EMBL" id="AL136082">
    <property type="status" value="NOT_ANNOTATED_CDS"/>
    <property type="molecule type" value="Genomic_DNA"/>
</dbReference>
<dbReference type="EMBL" id="AL589666">
    <property type="status" value="NOT_ANNOTATED_CDS"/>
    <property type="molecule type" value="Genomic_DNA"/>
</dbReference>
<dbReference type="EMBL" id="CH471051">
    <property type="protein sequence ID" value="EAW48631.1"/>
    <property type="molecule type" value="Genomic_DNA"/>
</dbReference>
<dbReference type="EMBL" id="BC005110">
    <property type="protein sequence ID" value="AAH05110.2"/>
    <property type="molecule type" value="mRNA"/>
</dbReference>
<dbReference type="EMBL" id="BC046520">
    <property type="protein sequence ID" value="AAH46520.1"/>
    <property type="molecule type" value="mRNA"/>
</dbReference>
<dbReference type="EMBL" id="BC068589">
    <property type="protein sequence ID" value="AAH68589.1"/>
    <property type="molecule type" value="mRNA"/>
</dbReference>
<dbReference type="EMBL" id="BC095419">
    <property type="protein sequence ID" value="AAH95419.1"/>
    <property type="molecule type" value="mRNA"/>
</dbReference>
<dbReference type="EMBL" id="AY044865">
    <property type="protein sequence ID" value="AAK97796.1"/>
    <property type="molecule type" value="mRNA"/>
</dbReference>
<dbReference type="EMBL" id="AF121863">
    <property type="protein sequence ID" value="AAD27836.1"/>
    <property type="molecule type" value="mRNA"/>
</dbReference>
<dbReference type="CCDS" id="CCDS5003.1">
    <molecule id="Q9Y5W7-2"/>
</dbReference>
<dbReference type="CCDS" id="CCDS5004.1">
    <molecule id="Q9Y5W7-1"/>
</dbReference>
<dbReference type="CCDS" id="CCDS75490.1">
    <molecule id="Q9Y5W7-4"/>
</dbReference>
<dbReference type="CCDS" id="CCDS78163.1">
    <molecule id="Q9Y5W7-3"/>
</dbReference>
<dbReference type="RefSeq" id="NP_001284543.1">
    <molecule id="Q9Y5W7-4"/>
    <property type="nucleotide sequence ID" value="NM_001297614.3"/>
</dbReference>
<dbReference type="RefSeq" id="NP_001291408.1">
    <molecule id="Q9Y5W7-3"/>
    <property type="nucleotide sequence ID" value="NM_001304479.2"/>
</dbReference>
<dbReference type="RefSeq" id="NP_065201.1">
    <molecule id="Q9Y5W7-2"/>
    <property type="nucleotide sequence ID" value="NM_020468.6"/>
</dbReference>
<dbReference type="RefSeq" id="NP_722523.1">
    <molecule id="Q9Y5W7-1"/>
    <property type="nucleotide sequence ID" value="NM_153816.6"/>
</dbReference>
<dbReference type="RefSeq" id="XP_047275076.1">
    <molecule id="Q9Y5W7-3"/>
    <property type="nucleotide sequence ID" value="XM_047419120.1"/>
</dbReference>
<dbReference type="PDB" id="4BGJ">
    <property type="method" value="X-ray"/>
    <property type="resolution" value="2.55 A"/>
    <property type="chains" value="A=558-702"/>
</dbReference>
<dbReference type="PDB" id="4PQO">
    <property type="method" value="X-ray"/>
    <property type="resolution" value="2.55 A"/>
    <property type="chains" value="A=561-686"/>
</dbReference>
<dbReference type="PDB" id="4PQP">
    <property type="method" value="X-ray"/>
    <property type="resolution" value="3.00 A"/>
    <property type="chains" value="A/B/C/D=561-686"/>
</dbReference>
<dbReference type="PDBsum" id="4BGJ"/>
<dbReference type="PDBsum" id="4PQO"/>
<dbReference type="PDBsum" id="4PQP"/>
<dbReference type="SMR" id="Q9Y5W7"/>
<dbReference type="BioGRID" id="121463">
    <property type="interactions" value="85"/>
</dbReference>
<dbReference type="FunCoup" id="Q9Y5W7">
    <property type="interactions" value="3785"/>
</dbReference>
<dbReference type="IntAct" id="Q9Y5W7">
    <property type="interactions" value="52"/>
</dbReference>
<dbReference type="MINT" id="Q9Y5W7"/>
<dbReference type="STRING" id="9606.ENSP00000313121"/>
<dbReference type="TCDB" id="3.A.34.1.1">
    <property type="family name" value="the sorting nexins of the escrt complexes (sn-escrt)"/>
</dbReference>
<dbReference type="GlyGen" id="Q9Y5W7">
    <property type="glycosylation" value="1 site, 1 O-linked glycan (1 site)"/>
</dbReference>
<dbReference type="iPTMnet" id="Q9Y5W7"/>
<dbReference type="PhosphoSitePlus" id="Q9Y5W7"/>
<dbReference type="SwissPalm" id="Q9Y5W7"/>
<dbReference type="BioMuta" id="SNX14"/>
<dbReference type="DMDM" id="254763401"/>
<dbReference type="jPOST" id="Q9Y5W7"/>
<dbReference type="MassIVE" id="Q9Y5W7"/>
<dbReference type="PaxDb" id="9606-ENSP00000313121"/>
<dbReference type="PeptideAtlas" id="Q9Y5W7"/>
<dbReference type="ProteomicsDB" id="86518">
    <molecule id="Q9Y5W7-1"/>
</dbReference>
<dbReference type="ProteomicsDB" id="86519">
    <molecule id="Q9Y5W7-2"/>
</dbReference>
<dbReference type="ProteomicsDB" id="86520">
    <molecule id="Q9Y5W7-3"/>
</dbReference>
<dbReference type="ProteomicsDB" id="86521">
    <molecule id="Q9Y5W7-4"/>
</dbReference>
<dbReference type="Pumba" id="Q9Y5W7"/>
<dbReference type="Antibodypedia" id="3006">
    <property type="antibodies" value="74 antibodies from 16 providers"/>
</dbReference>
<dbReference type="DNASU" id="57231"/>
<dbReference type="Ensembl" id="ENST00000314673.8">
    <molecule id="Q9Y5W7-1"/>
    <property type="protein sequence ID" value="ENSP00000313121.3"/>
    <property type="gene ID" value="ENSG00000135317.14"/>
</dbReference>
<dbReference type="Ensembl" id="ENST00000346348.7">
    <molecule id="Q9Y5W7-2"/>
    <property type="protein sequence ID" value="ENSP00000257769.3"/>
    <property type="gene ID" value="ENSG00000135317.14"/>
</dbReference>
<dbReference type="Ensembl" id="ENST00000369627.6">
    <molecule id="Q9Y5W7-4"/>
    <property type="protein sequence ID" value="ENSP00000358641.2"/>
    <property type="gene ID" value="ENSG00000135317.14"/>
</dbReference>
<dbReference type="Ensembl" id="ENST00000505648.5">
    <molecule id="Q9Y5W7-3"/>
    <property type="protein sequence ID" value="ENSP00000427380.1"/>
    <property type="gene ID" value="ENSG00000135317.14"/>
</dbReference>
<dbReference type="GeneID" id="57231"/>
<dbReference type="KEGG" id="hsa:57231"/>
<dbReference type="MANE-Select" id="ENST00000314673.8">
    <property type="protein sequence ID" value="ENSP00000313121.3"/>
    <property type="RefSeq nucleotide sequence ID" value="NM_153816.6"/>
    <property type="RefSeq protein sequence ID" value="NP_722523.1"/>
</dbReference>
<dbReference type="UCSC" id="uc003pkr.4">
    <molecule id="Q9Y5W7-1"/>
    <property type="organism name" value="human"/>
</dbReference>
<dbReference type="AGR" id="HGNC:14977"/>
<dbReference type="CTD" id="57231"/>
<dbReference type="DisGeNET" id="57231"/>
<dbReference type="GeneCards" id="SNX14"/>
<dbReference type="HGNC" id="HGNC:14977">
    <property type="gene designation" value="SNX14"/>
</dbReference>
<dbReference type="HPA" id="ENSG00000135317">
    <property type="expression patterns" value="Low tissue specificity"/>
</dbReference>
<dbReference type="MalaCards" id="SNX14"/>
<dbReference type="MIM" id="616105">
    <property type="type" value="gene"/>
</dbReference>
<dbReference type="MIM" id="616354">
    <property type="type" value="phenotype"/>
</dbReference>
<dbReference type="neXtProt" id="NX_Q9Y5W7"/>
<dbReference type="OpenTargets" id="ENSG00000135317"/>
<dbReference type="Orphanet" id="397709">
    <property type="disease" value="Intellectual disability-coarse face-macrocephaly-cerebellar hypotrophy syndrome"/>
</dbReference>
<dbReference type="PharmGKB" id="PA129840867"/>
<dbReference type="VEuPathDB" id="HostDB:ENSG00000135317"/>
<dbReference type="eggNOG" id="KOG2101">
    <property type="taxonomic scope" value="Eukaryota"/>
</dbReference>
<dbReference type="GeneTree" id="ENSGT00950000182856"/>
<dbReference type="HOGENOM" id="CLU_014115_0_0_1"/>
<dbReference type="InParanoid" id="Q9Y5W7"/>
<dbReference type="OMA" id="MYVYVIS"/>
<dbReference type="OrthoDB" id="5957963at2759"/>
<dbReference type="PAN-GO" id="Q9Y5W7">
    <property type="GO annotations" value="3 GO annotations based on evolutionary models"/>
</dbReference>
<dbReference type="PhylomeDB" id="Q9Y5W7"/>
<dbReference type="TreeFam" id="TF324055"/>
<dbReference type="PathwayCommons" id="Q9Y5W7"/>
<dbReference type="SignaLink" id="Q9Y5W7"/>
<dbReference type="BioGRID-ORCS" id="57231">
    <property type="hits" value="32 hits in 1159 CRISPR screens"/>
</dbReference>
<dbReference type="ChiTaRS" id="SNX14">
    <property type="organism name" value="human"/>
</dbReference>
<dbReference type="EvolutionaryTrace" id="Q9Y5W7"/>
<dbReference type="GenomeRNAi" id="57231"/>
<dbReference type="Pharos" id="Q9Y5W7">
    <property type="development level" value="Tbio"/>
</dbReference>
<dbReference type="PRO" id="PR:Q9Y5W7"/>
<dbReference type="Proteomes" id="UP000005640">
    <property type="component" value="Chromosome 6"/>
</dbReference>
<dbReference type="RNAct" id="Q9Y5W7">
    <property type="molecule type" value="protein"/>
</dbReference>
<dbReference type="Bgee" id="ENSG00000135317">
    <property type="expression patterns" value="Expressed in left testis and 177 other cell types or tissues"/>
</dbReference>
<dbReference type="ExpressionAtlas" id="Q9Y5W7">
    <property type="expression patterns" value="baseline and differential"/>
</dbReference>
<dbReference type="GO" id="GO:0005829">
    <property type="term" value="C:cytosol"/>
    <property type="evidence" value="ECO:0000314"/>
    <property type="project" value="HPA"/>
</dbReference>
<dbReference type="GO" id="GO:0030425">
    <property type="term" value="C:dendrite"/>
    <property type="evidence" value="ECO:0007669"/>
    <property type="project" value="UniProtKB-SubCell"/>
</dbReference>
<dbReference type="GO" id="GO:0043231">
    <property type="term" value="C:intracellular membrane-bounded organelle"/>
    <property type="evidence" value="ECO:0000314"/>
    <property type="project" value="HPA"/>
</dbReference>
<dbReference type="GO" id="GO:0005770">
    <property type="term" value="C:late endosome"/>
    <property type="evidence" value="ECO:0000314"/>
    <property type="project" value="UniProtKB"/>
</dbReference>
<dbReference type="GO" id="GO:0031902">
    <property type="term" value="C:late endosome membrane"/>
    <property type="evidence" value="ECO:0007669"/>
    <property type="project" value="UniProtKB-SubCell"/>
</dbReference>
<dbReference type="GO" id="GO:0005765">
    <property type="term" value="C:lysosomal membrane"/>
    <property type="evidence" value="ECO:0007669"/>
    <property type="project" value="UniProtKB-SubCell"/>
</dbReference>
<dbReference type="GO" id="GO:0005764">
    <property type="term" value="C:lysosome"/>
    <property type="evidence" value="ECO:0000314"/>
    <property type="project" value="UniProtKB"/>
</dbReference>
<dbReference type="GO" id="GO:0098794">
    <property type="term" value="C:postsynapse"/>
    <property type="evidence" value="ECO:0007669"/>
    <property type="project" value="GOC"/>
</dbReference>
<dbReference type="GO" id="GO:0035091">
    <property type="term" value="F:phosphatidylinositol binding"/>
    <property type="evidence" value="ECO:0000318"/>
    <property type="project" value="GO_Central"/>
</dbReference>
<dbReference type="GO" id="GO:0080025">
    <property type="term" value="F:phosphatidylinositol-3,5-bisphosphate binding"/>
    <property type="evidence" value="ECO:0000314"/>
    <property type="project" value="UniProtKB"/>
</dbReference>
<dbReference type="GO" id="GO:0097352">
    <property type="term" value="P:autophagosome maturation"/>
    <property type="evidence" value="ECO:0000315"/>
    <property type="project" value="UniProtKB"/>
</dbReference>
<dbReference type="GO" id="GO:0099170">
    <property type="term" value="P:postsynaptic modulation of chemical synaptic transmission"/>
    <property type="evidence" value="ECO:0007669"/>
    <property type="project" value="Ensembl"/>
</dbReference>
<dbReference type="GO" id="GO:0015031">
    <property type="term" value="P:protein transport"/>
    <property type="evidence" value="ECO:0007669"/>
    <property type="project" value="UniProtKB-KW"/>
</dbReference>
<dbReference type="CDD" id="cd06877">
    <property type="entry name" value="PX_SNX14"/>
    <property type="match status" value="1"/>
</dbReference>
<dbReference type="CDD" id="cd08722">
    <property type="entry name" value="RGS_SNX14"/>
    <property type="match status" value="1"/>
</dbReference>
<dbReference type="FunFam" id="1.10.167.10:FF:000004">
    <property type="entry name" value="sorting nexin-14 isoform X1"/>
    <property type="match status" value="1"/>
</dbReference>
<dbReference type="FunFam" id="3.30.1520.10:FF:000007">
    <property type="entry name" value="sorting nexin-14 isoform X1"/>
    <property type="match status" value="1"/>
</dbReference>
<dbReference type="Gene3D" id="3.30.1520.10">
    <property type="entry name" value="Phox-like domain"/>
    <property type="match status" value="1"/>
</dbReference>
<dbReference type="Gene3D" id="1.10.167.10">
    <property type="entry name" value="Regulator of G-protein Signalling 4, domain 2"/>
    <property type="match status" value="1"/>
</dbReference>
<dbReference type="InterPro" id="IPR003114">
    <property type="entry name" value="Phox_assoc"/>
</dbReference>
<dbReference type="InterPro" id="IPR001683">
    <property type="entry name" value="PX_dom"/>
</dbReference>
<dbReference type="InterPro" id="IPR036871">
    <property type="entry name" value="PX_dom_sf"/>
</dbReference>
<dbReference type="InterPro" id="IPR016137">
    <property type="entry name" value="RGS"/>
</dbReference>
<dbReference type="InterPro" id="IPR036305">
    <property type="entry name" value="RGS_sf"/>
</dbReference>
<dbReference type="InterPro" id="IPR044926">
    <property type="entry name" value="RGS_subdomain_2"/>
</dbReference>
<dbReference type="InterPro" id="IPR037436">
    <property type="entry name" value="SNX14_PX"/>
</dbReference>
<dbReference type="InterPro" id="IPR037892">
    <property type="entry name" value="SNX14_RGS"/>
</dbReference>
<dbReference type="InterPro" id="IPR013937">
    <property type="entry name" value="Sorting_nexin_C"/>
</dbReference>
<dbReference type="PANTHER" id="PTHR22775">
    <property type="entry name" value="SORTING NEXIN"/>
    <property type="match status" value="1"/>
</dbReference>
<dbReference type="PANTHER" id="PTHR22775:SF44">
    <property type="entry name" value="SORTING NEXIN-14"/>
    <property type="match status" value="1"/>
</dbReference>
<dbReference type="Pfam" id="PF08628">
    <property type="entry name" value="Nexin_C"/>
    <property type="match status" value="1"/>
</dbReference>
<dbReference type="Pfam" id="PF00787">
    <property type="entry name" value="PX"/>
    <property type="match status" value="1"/>
</dbReference>
<dbReference type="Pfam" id="PF02194">
    <property type="entry name" value="PXA"/>
    <property type="match status" value="1"/>
</dbReference>
<dbReference type="Pfam" id="PF00615">
    <property type="entry name" value="RGS"/>
    <property type="match status" value="1"/>
</dbReference>
<dbReference type="SMART" id="SM00312">
    <property type="entry name" value="PX"/>
    <property type="match status" value="1"/>
</dbReference>
<dbReference type="SMART" id="SM00313">
    <property type="entry name" value="PXA"/>
    <property type="match status" value="1"/>
</dbReference>
<dbReference type="SMART" id="SM00315">
    <property type="entry name" value="RGS"/>
    <property type="match status" value="1"/>
</dbReference>
<dbReference type="SUPFAM" id="SSF64268">
    <property type="entry name" value="PX domain"/>
    <property type="match status" value="1"/>
</dbReference>
<dbReference type="SUPFAM" id="SSF48097">
    <property type="entry name" value="Regulator of G-protein signaling, RGS"/>
    <property type="match status" value="1"/>
</dbReference>
<dbReference type="PROSITE" id="PS50195">
    <property type="entry name" value="PX"/>
    <property type="match status" value="1"/>
</dbReference>
<dbReference type="PROSITE" id="PS51207">
    <property type="entry name" value="PXA"/>
    <property type="match status" value="1"/>
</dbReference>
<dbReference type="PROSITE" id="PS50132">
    <property type="entry name" value="RGS"/>
    <property type="match status" value="1"/>
</dbReference>
<keyword id="KW-0002">3D-structure</keyword>
<keyword id="KW-0025">Alternative splicing</keyword>
<keyword id="KW-0966">Cell projection</keyword>
<keyword id="KW-0225">Disease variant</keyword>
<keyword id="KW-0967">Endosome</keyword>
<keyword id="KW-0991">Intellectual disability</keyword>
<keyword id="KW-0458">Lysosome</keyword>
<keyword id="KW-0472">Membrane</keyword>
<keyword id="KW-0523">Neurodegeneration</keyword>
<keyword id="KW-0597">Phosphoprotein</keyword>
<keyword id="KW-0653">Protein transport</keyword>
<keyword id="KW-1267">Proteomics identification</keyword>
<keyword id="KW-1185">Reference proteome</keyword>
<keyword id="KW-0950">Spinocerebellar ataxia</keyword>
<keyword id="KW-0812">Transmembrane</keyword>
<keyword id="KW-1133">Transmembrane helix</keyword>
<keyword id="KW-0813">Transport</keyword>
<sequence length="946" mass="110182">MVPWVRTMGQKLKQRLRLDVGREICRQYPLFCFLLLCLSAASLLLNRYIHILMIFWSFVAGVVTFYCSLGPDSLLPNIFFTIKYKPKQLGLQELFPQGHSCAVCGKVKCKRHRPSLLLENYQPWLDLKISSKVDASLSEVLELVLENFVYPWYRDVTDDESFVDELRITLRFFASVLIRRIHKVDIPSIITKKLLKAAMKHIEVIVKARQKVKNTEFLQQAALEEYGPELHVALRSRRDELHYLRKLTELLFPYILPPKATDCRSLTLLIREILSGSVFLPSLDFLADPDTVNHLLIIFIDDSPPEKATEPASPLVPFLQKFAEPRNKKPSVLKLELKQIREQQDLLFRFMNFLKQEGAVHVLQFCLTVEEFNDRILRPELSNDEMLSLHEELQKIYKTYCLDESIDKIRFDPFIVEEIQRIAEGPYIDVVKLQTMRCLFEAYEHVLSLLENVFTPMFCHSDEYFRQLLRGAESPTRNSKLNRGSLSLDDFRNTQKRGESFGISRIGSKIKGVFKSTTMEGAMLPNYGVAEGEDDFIEEGIVVMEDDSPVEAVSTPNTPRNLAAWKISIPYVDFFEDPSSERKEKKERIPVFCIDVERNDRRAVGHEPEHWSVYRRYLEFYVLESKLTEFHGAFPDAQLPSKRIIGPKNYEFLKSKREEFQEYLQKLLQHPELSNSQLLADFLSPNGGETQFLDKILPDVNLGKIIKSVPGKLMKEKGQHLEPFIMNFINSCESPKPKPSRPELTILSPTSENNKKLFNDLFKNNANRAENTERKQNQNYFMEVMTVEGVYDYLMYVGRVVFQVPDWLHHLLMGTRILFKNTLEMYTDYYLQCKLEQLFQEHRLVSLITLLRDAIFCENTEPRSLQDKQKGAKQTFEEMMNYIPDLLVKCIGEETKYESIRLLFDGLQQPVLNKQLTYVLLDIVIQELFPELNKVQKEVTSVTSWM</sequence>